<name>CAIA_ECOL5</name>
<organism>
    <name type="scientific">Escherichia coli O6:K15:H31 (strain 536 / UPEC)</name>
    <dbReference type="NCBI Taxonomy" id="362663"/>
    <lineage>
        <taxon>Bacteria</taxon>
        <taxon>Pseudomonadati</taxon>
        <taxon>Pseudomonadota</taxon>
        <taxon>Gammaproteobacteria</taxon>
        <taxon>Enterobacterales</taxon>
        <taxon>Enterobacteriaceae</taxon>
        <taxon>Escherichia</taxon>
    </lineage>
</organism>
<proteinExistence type="inferred from homology"/>
<sequence length="380" mass="42574">MDFNLNDEQELFVAGIRELMASENWEAYFAECDRDSVYPERFVKALADMGIDCLLIPEEHGGLDAGFVTLAAVWMELGRLGAPTYVLYQLPGGFNTFLREGTQEQIDKIMAFRGTGKQMWNSAITEPGAGSDVGSLKTTYTRRNGKIYLNGSKCFITSSAYTPYIVVMARDGASPDKPVYTEWFVDMSKPGIKVTKLEKLGLRMDSCCEITFDDVELDEKDMFGREGNGFNRVKEEFDHERFLVALTNYGTAMCAFEDAARYANQRVQFGEAIGRFQLIQEKFAHMAIKLNSMKNMLYEAAWKADNGTITSGDAAMCKYFCANAAFEVVDSAMQVLGGVGIAGNHRISRFWRDLRVDRVSGGSDEMQILTLGRAVLKQYR</sequence>
<dbReference type="EC" id="1.3.8.13" evidence="1"/>
<dbReference type="EMBL" id="CP000247">
    <property type="protein sequence ID" value="ABG68081.1"/>
    <property type="molecule type" value="Genomic_DNA"/>
</dbReference>
<dbReference type="RefSeq" id="WP_000347104.1">
    <property type="nucleotide sequence ID" value="NC_008253.1"/>
</dbReference>
<dbReference type="SMR" id="Q0TLV0"/>
<dbReference type="KEGG" id="ecp:ECP_0039"/>
<dbReference type="HOGENOM" id="CLU_018204_0_2_6"/>
<dbReference type="UniPathway" id="UPA00117"/>
<dbReference type="Proteomes" id="UP000009182">
    <property type="component" value="Chromosome"/>
</dbReference>
<dbReference type="GO" id="GO:0005737">
    <property type="term" value="C:cytoplasm"/>
    <property type="evidence" value="ECO:0007669"/>
    <property type="project" value="UniProtKB-SubCell"/>
</dbReference>
<dbReference type="GO" id="GO:0003995">
    <property type="term" value="F:acyl-CoA dehydrogenase activity"/>
    <property type="evidence" value="ECO:0007669"/>
    <property type="project" value="InterPro"/>
</dbReference>
<dbReference type="GO" id="GO:0050660">
    <property type="term" value="F:flavin adenine dinucleotide binding"/>
    <property type="evidence" value="ECO:0007669"/>
    <property type="project" value="InterPro"/>
</dbReference>
<dbReference type="GO" id="GO:0009437">
    <property type="term" value="P:carnitine metabolic process"/>
    <property type="evidence" value="ECO:0007669"/>
    <property type="project" value="UniProtKB-UniRule"/>
</dbReference>
<dbReference type="CDD" id="cd00567">
    <property type="entry name" value="ACAD"/>
    <property type="match status" value="1"/>
</dbReference>
<dbReference type="FunFam" id="1.20.140.10:FF:000001">
    <property type="entry name" value="Acyl-CoA dehydrogenase"/>
    <property type="match status" value="1"/>
</dbReference>
<dbReference type="FunFam" id="2.40.110.10:FF:000002">
    <property type="entry name" value="Acyl-CoA dehydrogenase fadE12"/>
    <property type="match status" value="1"/>
</dbReference>
<dbReference type="FunFam" id="1.10.540.10:FF:000005">
    <property type="entry name" value="Crotonobetainyl-CoA reductase"/>
    <property type="match status" value="1"/>
</dbReference>
<dbReference type="Gene3D" id="1.10.540.10">
    <property type="entry name" value="Acyl-CoA dehydrogenase/oxidase, N-terminal domain"/>
    <property type="match status" value="1"/>
</dbReference>
<dbReference type="Gene3D" id="2.40.110.10">
    <property type="entry name" value="Butyryl-CoA Dehydrogenase, subunit A, domain 2"/>
    <property type="match status" value="1"/>
</dbReference>
<dbReference type="Gene3D" id="1.20.140.10">
    <property type="entry name" value="Butyryl-CoA Dehydrogenase, subunit A, domain 3"/>
    <property type="match status" value="1"/>
</dbReference>
<dbReference type="HAMAP" id="MF_01052">
    <property type="entry name" value="CaiA"/>
    <property type="match status" value="1"/>
</dbReference>
<dbReference type="InterPro" id="IPR006089">
    <property type="entry name" value="Acyl-CoA_DH_CS"/>
</dbReference>
<dbReference type="InterPro" id="IPR006091">
    <property type="entry name" value="Acyl-CoA_Oxase/DH_mid-dom"/>
</dbReference>
<dbReference type="InterPro" id="IPR046373">
    <property type="entry name" value="Acyl-CoA_Oxase/DH_mid-dom_sf"/>
</dbReference>
<dbReference type="InterPro" id="IPR036250">
    <property type="entry name" value="AcylCo_DH-like_C"/>
</dbReference>
<dbReference type="InterPro" id="IPR009075">
    <property type="entry name" value="AcylCo_DH/oxidase_C"/>
</dbReference>
<dbReference type="InterPro" id="IPR013786">
    <property type="entry name" value="AcylCoA_DH/ox_N"/>
</dbReference>
<dbReference type="InterPro" id="IPR037069">
    <property type="entry name" value="AcylCoA_DH/ox_N_sf"/>
</dbReference>
<dbReference type="InterPro" id="IPR009100">
    <property type="entry name" value="AcylCoA_DH/oxidase_NM_dom_sf"/>
</dbReference>
<dbReference type="InterPro" id="IPR023450">
    <property type="entry name" value="CaiA"/>
</dbReference>
<dbReference type="NCBIfam" id="NF002885">
    <property type="entry name" value="PRK03354.1"/>
    <property type="match status" value="1"/>
</dbReference>
<dbReference type="PANTHER" id="PTHR43884">
    <property type="entry name" value="ACYL-COA DEHYDROGENASE"/>
    <property type="match status" value="1"/>
</dbReference>
<dbReference type="PANTHER" id="PTHR43884:SF12">
    <property type="entry name" value="ISOVALERYL-COA DEHYDROGENASE, MITOCHONDRIAL-RELATED"/>
    <property type="match status" value="1"/>
</dbReference>
<dbReference type="Pfam" id="PF00441">
    <property type="entry name" value="Acyl-CoA_dh_1"/>
    <property type="match status" value="1"/>
</dbReference>
<dbReference type="Pfam" id="PF02770">
    <property type="entry name" value="Acyl-CoA_dh_M"/>
    <property type="match status" value="1"/>
</dbReference>
<dbReference type="Pfam" id="PF02771">
    <property type="entry name" value="Acyl-CoA_dh_N"/>
    <property type="match status" value="1"/>
</dbReference>
<dbReference type="PIRSF" id="PIRSF016578">
    <property type="entry name" value="HsaA"/>
    <property type="match status" value="1"/>
</dbReference>
<dbReference type="SUPFAM" id="SSF47203">
    <property type="entry name" value="Acyl-CoA dehydrogenase C-terminal domain-like"/>
    <property type="match status" value="1"/>
</dbReference>
<dbReference type="SUPFAM" id="SSF56645">
    <property type="entry name" value="Acyl-CoA dehydrogenase NM domain-like"/>
    <property type="match status" value="1"/>
</dbReference>
<dbReference type="PROSITE" id="PS00072">
    <property type="entry name" value="ACYL_COA_DH_1"/>
    <property type="match status" value="1"/>
</dbReference>
<dbReference type="PROSITE" id="PS00073">
    <property type="entry name" value="ACYL_COA_DH_2"/>
    <property type="match status" value="1"/>
</dbReference>
<gene>
    <name evidence="1" type="primary">caiA</name>
    <name type="ordered locus">ECP_0039</name>
</gene>
<keyword id="KW-0963">Cytoplasm</keyword>
<keyword id="KW-0274">FAD</keyword>
<keyword id="KW-0285">Flavoprotein</keyword>
<keyword id="KW-0560">Oxidoreductase</keyword>
<protein>
    <recommendedName>
        <fullName evidence="1">Crotonobetainyl-CoA reductase</fullName>
        <ecNumber evidence="1">1.3.8.13</ecNumber>
    </recommendedName>
    <alternativeName>
        <fullName evidence="1">Crotonobetainyl-CoA dehydrogenase</fullName>
    </alternativeName>
</protein>
<accession>Q0TLV0</accession>
<evidence type="ECO:0000255" key="1">
    <source>
        <dbReference type="HAMAP-Rule" id="MF_01052"/>
    </source>
</evidence>
<reference key="1">
    <citation type="journal article" date="2006" name="Mol. Microbiol.">
        <title>Role of pathogenicity island-associated integrases in the genome plasticity of uropathogenic Escherichia coli strain 536.</title>
        <authorList>
            <person name="Hochhut B."/>
            <person name="Wilde C."/>
            <person name="Balling G."/>
            <person name="Middendorf B."/>
            <person name="Dobrindt U."/>
            <person name="Brzuszkiewicz E."/>
            <person name="Gottschalk G."/>
            <person name="Carniel E."/>
            <person name="Hacker J."/>
        </authorList>
    </citation>
    <scope>NUCLEOTIDE SEQUENCE [LARGE SCALE GENOMIC DNA]</scope>
    <source>
        <strain>536 / UPEC</strain>
    </source>
</reference>
<comment type="function">
    <text evidence="1">Catalyzes the reduction of crotonobetainyl-CoA to gamma-butyrobetainyl-CoA.</text>
</comment>
<comment type="catalytic activity">
    <reaction evidence="1">
        <text>4-(trimethylamino)butanoyl-CoA + oxidized [electron-transfer flavoprotein] + H(+) = crotonobetainyl-CoA + reduced [electron-transfer flavoprotein]</text>
        <dbReference type="Rhea" id="RHEA:51584"/>
        <dbReference type="Rhea" id="RHEA-COMP:10685"/>
        <dbReference type="Rhea" id="RHEA-COMP:10686"/>
        <dbReference type="ChEBI" id="CHEBI:15378"/>
        <dbReference type="ChEBI" id="CHEBI:57692"/>
        <dbReference type="ChEBI" id="CHEBI:58307"/>
        <dbReference type="ChEBI" id="CHEBI:60933"/>
        <dbReference type="ChEBI" id="CHEBI:61513"/>
        <dbReference type="EC" id="1.3.8.13"/>
    </reaction>
</comment>
<comment type="cofactor">
    <cofactor evidence="1">
        <name>FAD</name>
        <dbReference type="ChEBI" id="CHEBI:57692"/>
    </cofactor>
</comment>
<comment type="pathway">
    <text evidence="1">Amine and polyamine metabolism; carnitine metabolism.</text>
</comment>
<comment type="subunit">
    <text evidence="1">Homotetramer.</text>
</comment>
<comment type="subcellular location">
    <subcellularLocation>
        <location evidence="1">Cytoplasm</location>
    </subcellularLocation>
</comment>
<comment type="similarity">
    <text evidence="1">Belongs to the acyl-CoA dehydrogenase family.</text>
</comment>
<feature type="chain" id="PRO_1000064348" description="Crotonobetainyl-CoA reductase">
    <location>
        <begin position="1"/>
        <end position="380"/>
    </location>
</feature>